<dbReference type="EMBL" id="BA000017">
    <property type="protein sequence ID" value="BAB56270.1"/>
    <property type="molecule type" value="Genomic_DNA"/>
</dbReference>
<dbReference type="SMR" id="Q99XA5"/>
<dbReference type="KEGG" id="sav:SAV0108"/>
<dbReference type="HOGENOM" id="CLU_017584_0_0_9"/>
<dbReference type="PhylomeDB" id="Q99XA5"/>
<dbReference type="Proteomes" id="UP000002481">
    <property type="component" value="Chromosome"/>
</dbReference>
<dbReference type="GO" id="GO:0003677">
    <property type="term" value="F:DNA binding"/>
    <property type="evidence" value="ECO:0007669"/>
    <property type="project" value="UniProtKB-KW"/>
</dbReference>
<dbReference type="GO" id="GO:0003700">
    <property type="term" value="F:DNA-binding transcription factor activity"/>
    <property type="evidence" value="ECO:0007669"/>
    <property type="project" value="InterPro"/>
</dbReference>
<dbReference type="GO" id="GO:0030170">
    <property type="term" value="F:pyridoxal phosphate binding"/>
    <property type="evidence" value="ECO:0007669"/>
    <property type="project" value="InterPro"/>
</dbReference>
<dbReference type="GO" id="GO:0008483">
    <property type="term" value="F:transaminase activity"/>
    <property type="evidence" value="ECO:0007669"/>
    <property type="project" value="UniProtKB-KW"/>
</dbReference>
<dbReference type="GO" id="GO:1901605">
    <property type="term" value="P:alpha-amino acid metabolic process"/>
    <property type="evidence" value="ECO:0007669"/>
    <property type="project" value="TreeGrafter"/>
</dbReference>
<dbReference type="GO" id="GO:0009058">
    <property type="term" value="P:biosynthetic process"/>
    <property type="evidence" value="ECO:0007669"/>
    <property type="project" value="InterPro"/>
</dbReference>
<dbReference type="CDD" id="cd00609">
    <property type="entry name" value="AAT_like"/>
    <property type="match status" value="1"/>
</dbReference>
<dbReference type="CDD" id="cd07377">
    <property type="entry name" value="WHTH_GntR"/>
    <property type="match status" value="1"/>
</dbReference>
<dbReference type="FunFam" id="3.40.640.10:FF:000023">
    <property type="entry name" value="Transcriptional regulator, GntR family"/>
    <property type="match status" value="1"/>
</dbReference>
<dbReference type="Gene3D" id="3.90.1150.10">
    <property type="entry name" value="Aspartate Aminotransferase, domain 1"/>
    <property type="match status" value="1"/>
</dbReference>
<dbReference type="Gene3D" id="3.40.640.10">
    <property type="entry name" value="Type I PLP-dependent aspartate aminotransferase-like (Major domain)"/>
    <property type="match status" value="1"/>
</dbReference>
<dbReference type="Gene3D" id="1.10.10.10">
    <property type="entry name" value="Winged helix-like DNA-binding domain superfamily/Winged helix DNA-binding domain"/>
    <property type="match status" value="1"/>
</dbReference>
<dbReference type="InterPro" id="IPR004839">
    <property type="entry name" value="Aminotransferase_I/II_large"/>
</dbReference>
<dbReference type="InterPro" id="IPR050859">
    <property type="entry name" value="Class-I_PLP-dep_aminotransf"/>
</dbReference>
<dbReference type="InterPro" id="IPR015424">
    <property type="entry name" value="PyrdxlP-dep_Trfase"/>
</dbReference>
<dbReference type="InterPro" id="IPR015421">
    <property type="entry name" value="PyrdxlP-dep_Trfase_major"/>
</dbReference>
<dbReference type="InterPro" id="IPR015422">
    <property type="entry name" value="PyrdxlP-dep_Trfase_small"/>
</dbReference>
<dbReference type="InterPro" id="IPR000524">
    <property type="entry name" value="Tscrpt_reg_HTH_GntR"/>
</dbReference>
<dbReference type="InterPro" id="IPR036388">
    <property type="entry name" value="WH-like_DNA-bd_sf"/>
</dbReference>
<dbReference type="InterPro" id="IPR036390">
    <property type="entry name" value="WH_DNA-bd_sf"/>
</dbReference>
<dbReference type="PANTHER" id="PTHR42790">
    <property type="entry name" value="AMINOTRANSFERASE"/>
    <property type="match status" value="1"/>
</dbReference>
<dbReference type="PANTHER" id="PTHR42790:SF19">
    <property type="entry name" value="KYNURENINE_ALPHA-AMINOADIPATE AMINOTRANSFERASE, MITOCHONDRIAL"/>
    <property type="match status" value="1"/>
</dbReference>
<dbReference type="Pfam" id="PF00155">
    <property type="entry name" value="Aminotran_1_2"/>
    <property type="match status" value="1"/>
</dbReference>
<dbReference type="Pfam" id="PF00392">
    <property type="entry name" value="GntR"/>
    <property type="match status" value="1"/>
</dbReference>
<dbReference type="PRINTS" id="PR00035">
    <property type="entry name" value="HTHGNTR"/>
</dbReference>
<dbReference type="SMART" id="SM00345">
    <property type="entry name" value="HTH_GNTR"/>
    <property type="match status" value="1"/>
</dbReference>
<dbReference type="SUPFAM" id="SSF53383">
    <property type="entry name" value="PLP-dependent transferases"/>
    <property type="match status" value="1"/>
</dbReference>
<dbReference type="SUPFAM" id="SSF46785">
    <property type="entry name" value="Winged helix' DNA-binding domain"/>
    <property type="match status" value="1"/>
</dbReference>
<dbReference type="PROSITE" id="PS50949">
    <property type="entry name" value="HTH_GNTR"/>
    <property type="match status" value="1"/>
</dbReference>
<accession>Q99XA5</accession>
<comment type="function">
    <text evidence="1">Positively regulates the expression of the NorB efflux pump and negatively regulates the expression of the AbcA efflux pump. Binds specifically to the promoters of norA, norB and norC and abcA genes. Could also have an aminotransferase activity (By similarity).</text>
</comment>
<comment type="cofactor">
    <cofactor evidence="3">
        <name>pyridoxal 5'-phosphate</name>
        <dbReference type="ChEBI" id="CHEBI:597326"/>
    </cofactor>
</comment>
<comment type="similarity">
    <text evidence="3">In the C-terminal section; belongs to the class-I pyridoxal-phosphate-dependent aminotransferase family.</text>
</comment>
<feature type="initiator methionine" description="Removed" evidence="1">
    <location>
        <position position="1"/>
    </location>
</feature>
<feature type="chain" id="PRO_0000305321" description="HTH-type transcriptional regulator NorG">
    <location>
        <begin position="2"/>
        <end position="442"/>
    </location>
</feature>
<feature type="domain" description="HTH gntR-type" evidence="2">
    <location>
        <begin position="2"/>
        <end position="46"/>
    </location>
</feature>
<feature type="DNA-binding region" description="H-T-H motif" evidence="2">
    <location>
        <begin position="6"/>
        <end position="25"/>
    </location>
</feature>
<feature type="modified residue" description="N6-(pyridoxal phosphate)lysine" evidence="1">
    <location>
        <position position="288"/>
    </location>
</feature>
<organism>
    <name type="scientific">Staphylococcus aureus (strain Mu50 / ATCC 700699)</name>
    <dbReference type="NCBI Taxonomy" id="158878"/>
    <lineage>
        <taxon>Bacteria</taxon>
        <taxon>Bacillati</taxon>
        <taxon>Bacillota</taxon>
        <taxon>Bacilli</taxon>
        <taxon>Bacillales</taxon>
        <taxon>Staphylococcaceae</taxon>
        <taxon>Staphylococcus</taxon>
    </lineage>
</organism>
<evidence type="ECO:0000250" key="1"/>
<evidence type="ECO:0000255" key="2">
    <source>
        <dbReference type="PROSITE-ProRule" id="PRU00307"/>
    </source>
</evidence>
<evidence type="ECO:0000305" key="3"/>
<gene>
    <name type="primary">norG</name>
    <name type="ordered locus">SAV0108</name>
</gene>
<sequence>MKIPPQRQLAIQYNVNRVTIIKSIELLEAEGFIYTKVGSGTYVNDYLNEAHITNKWSEMMLWSSQQRSQYTVQLINKIETDDSYIHISKGELGISLMPHIQLKKAMSNTASHIEDLSFGYNNGYGYIKLRDIIVERMSKQGINVGRENVMITSGALHAIQLLSIGFLGQDAIIISNTPSYIHSTNVFEQLNFRHIDVPYNQINEINTIIDRFINFKNKAIYIEPRFNNPTGRSLTNEQKKNIITYSERHNIPIIEDDIFRDIFFSDPTPAIKTYDKLGKVIHISSFSKTIAPAIRIGWIVASEKIIEQLADVRMQIDYGSSILSQMVVYEMLKNKSYDKHLVKLRYVLKDKRDFMLNILNNLFKDIAHWEVPSGGYFVWLVFKIDIDIKYLFYELLSKEKILINPGYIYGSKEKSIRLSFAFESNENIKHALYKIYTYVKKV</sequence>
<proteinExistence type="inferred from homology"/>
<name>NORG_STAAM</name>
<keyword id="KW-0010">Activator</keyword>
<keyword id="KW-0032">Aminotransferase</keyword>
<keyword id="KW-0238">DNA-binding</keyword>
<keyword id="KW-0663">Pyridoxal phosphate</keyword>
<keyword id="KW-0678">Repressor</keyword>
<keyword id="KW-0804">Transcription</keyword>
<keyword id="KW-0805">Transcription regulation</keyword>
<keyword id="KW-0808">Transferase</keyword>
<protein>
    <recommendedName>
        <fullName>HTH-type transcriptional regulator NorG</fullName>
    </recommendedName>
</protein>
<reference key="1">
    <citation type="journal article" date="2001" name="Lancet">
        <title>Whole genome sequencing of meticillin-resistant Staphylococcus aureus.</title>
        <authorList>
            <person name="Kuroda M."/>
            <person name="Ohta T."/>
            <person name="Uchiyama I."/>
            <person name="Baba T."/>
            <person name="Yuzawa H."/>
            <person name="Kobayashi I."/>
            <person name="Cui L."/>
            <person name="Oguchi A."/>
            <person name="Aoki K."/>
            <person name="Nagai Y."/>
            <person name="Lian J.-Q."/>
            <person name="Ito T."/>
            <person name="Kanamori M."/>
            <person name="Matsumaru H."/>
            <person name="Maruyama A."/>
            <person name="Murakami H."/>
            <person name="Hosoyama A."/>
            <person name="Mizutani-Ui Y."/>
            <person name="Takahashi N.K."/>
            <person name="Sawano T."/>
            <person name="Inoue R."/>
            <person name="Kaito C."/>
            <person name="Sekimizu K."/>
            <person name="Hirakawa H."/>
            <person name="Kuhara S."/>
            <person name="Goto S."/>
            <person name="Yabuzaki J."/>
            <person name="Kanehisa M."/>
            <person name="Yamashita A."/>
            <person name="Oshima K."/>
            <person name="Furuya K."/>
            <person name="Yoshino C."/>
            <person name="Shiba T."/>
            <person name="Hattori M."/>
            <person name="Ogasawara N."/>
            <person name="Hayashi H."/>
            <person name="Hiramatsu K."/>
        </authorList>
    </citation>
    <scope>NUCLEOTIDE SEQUENCE [LARGE SCALE GENOMIC DNA]</scope>
    <source>
        <strain>Mu50 / ATCC 700699</strain>
    </source>
</reference>